<feature type="chain" id="PRO_0000317951" description="Autophagy-related protein 13">
    <location>
        <begin position="1"/>
        <end position="779"/>
    </location>
</feature>
<feature type="region of interest" description="Disordered" evidence="3">
    <location>
        <begin position="298"/>
        <end position="368"/>
    </location>
</feature>
<feature type="region of interest" description="Disordered" evidence="3">
    <location>
        <begin position="392"/>
        <end position="488"/>
    </location>
</feature>
<feature type="region of interest" description="Disordered" evidence="3">
    <location>
        <begin position="520"/>
        <end position="541"/>
    </location>
</feature>
<feature type="region of interest" description="Disordered" evidence="3">
    <location>
        <begin position="571"/>
        <end position="652"/>
    </location>
</feature>
<feature type="compositionally biased region" description="Polar residues" evidence="3">
    <location>
        <begin position="308"/>
        <end position="320"/>
    </location>
</feature>
<feature type="compositionally biased region" description="Low complexity" evidence="3">
    <location>
        <begin position="394"/>
        <end position="425"/>
    </location>
</feature>
<feature type="compositionally biased region" description="Polar residues" evidence="3">
    <location>
        <begin position="426"/>
        <end position="455"/>
    </location>
</feature>
<feature type="compositionally biased region" description="Low complexity" evidence="3">
    <location>
        <begin position="456"/>
        <end position="470"/>
    </location>
</feature>
<feature type="compositionally biased region" description="Polar residues" evidence="3">
    <location>
        <begin position="471"/>
        <end position="488"/>
    </location>
</feature>
<feature type="compositionally biased region" description="Polar residues" evidence="3">
    <location>
        <begin position="520"/>
        <end position="533"/>
    </location>
</feature>
<feature type="compositionally biased region" description="Low complexity" evidence="3">
    <location>
        <begin position="593"/>
        <end position="602"/>
    </location>
</feature>
<feature type="compositionally biased region" description="Low complexity" evidence="3">
    <location>
        <begin position="620"/>
        <end position="632"/>
    </location>
</feature>
<feature type="compositionally biased region" description="Polar residues" evidence="3">
    <location>
        <begin position="642"/>
        <end position="652"/>
    </location>
</feature>
<evidence type="ECO:0000250" key="1"/>
<evidence type="ECO:0000250" key="2">
    <source>
        <dbReference type="UniProtKB" id="Q06628"/>
    </source>
</evidence>
<evidence type="ECO:0000256" key="3">
    <source>
        <dbReference type="SAM" id="MobiDB-lite"/>
    </source>
</evidence>
<evidence type="ECO:0000305" key="4"/>
<protein>
    <recommendedName>
        <fullName>Autophagy-related protein 13</fullName>
    </recommendedName>
</protein>
<accession>A3LQY1</accession>
<gene>
    <name type="primary">ATG13</name>
    <name type="ORF">PICST_83006</name>
</gene>
<proteinExistence type="inferred from homology"/>
<name>ATG13_PICST</name>
<reference key="1">
    <citation type="journal article" date="2007" name="Nat. Biotechnol.">
        <title>Genome sequence of the lignocellulose-bioconverting and xylose-fermenting yeast Pichia stipitis.</title>
        <authorList>
            <person name="Jeffries T.W."/>
            <person name="Grigoriev I.V."/>
            <person name="Grimwood J."/>
            <person name="Laplaza J.M."/>
            <person name="Aerts A."/>
            <person name="Salamov A."/>
            <person name="Schmutz J."/>
            <person name="Lindquist E."/>
            <person name="Dehal P."/>
            <person name="Shapiro H."/>
            <person name="Jin Y.-S."/>
            <person name="Passoth V."/>
            <person name="Richardson P.M."/>
        </authorList>
    </citation>
    <scope>NUCLEOTIDE SEQUENCE [LARGE SCALE GENOMIC DNA]</scope>
    <source>
        <strain>ATCC 58785 / CBS 6054 / NBRC 10063 / NRRL Y-11545</strain>
    </source>
</reference>
<organism>
    <name type="scientific">Scheffersomyces stipitis (strain ATCC 58785 / CBS 6054 / NBRC 10063 / NRRL Y-11545)</name>
    <name type="common">Yeast</name>
    <name type="synonym">Pichia stipitis</name>
    <dbReference type="NCBI Taxonomy" id="322104"/>
    <lineage>
        <taxon>Eukaryota</taxon>
        <taxon>Fungi</taxon>
        <taxon>Dikarya</taxon>
        <taxon>Ascomycota</taxon>
        <taxon>Saccharomycotina</taxon>
        <taxon>Pichiomycetes</taxon>
        <taxon>Debaryomycetaceae</taxon>
        <taxon>Scheffersomyces</taxon>
    </lineage>
</organism>
<dbReference type="EMBL" id="CP000497">
    <property type="protein sequence ID" value="ABN65294.2"/>
    <property type="molecule type" value="Genomic_DNA"/>
</dbReference>
<dbReference type="RefSeq" id="XP_001383323.2">
    <property type="nucleotide sequence ID" value="XM_001383286.1"/>
</dbReference>
<dbReference type="SMR" id="A3LQY1"/>
<dbReference type="FunCoup" id="A3LQY1">
    <property type="interactions" value="39"/>
</dbReference>
<dbReference type="STRING" id="322104.A3LQY1"/>
<dbReference type="GeneID" id="4838362"/>
<dbReference type="KEGG" id="pic:PICST_83006"/>
<dbReference type="eggNOG" id="KOG4573">
    <property type="taxonomic scope" value="Eukaryota"/>
</dbReference>
<dbReference type="HOGENOM" id="CLU_366802_0_0_1"/>
<dbReference type="InParanoid" id="A3LQY1"/>
<dbReference type="OMA" id="FHQVGPT"/>
<dbReference type="OrthoDB" id="70161at2759"/>
<dbReference type="Proteomes" id="UP000002258">
    <property type="component" value="Chromosome 3"/>
</dbReference>
<dbReference type="GO" id="GO:1990316">
    <property type="term" value="C:Atg1/ULK1 kinase complex"/>
    <property type="evidence" value="ECO:0007669"/>
    <property type="project" value="InterPro"/>
</dbReference>
<dbReference type="GO" id="GO:0005829">
    <property type="term" value="C:cytosol"/>
    <property type="evidence" value="ECO:0007669"/>
    <property type="project" value="TreeGrafter"/>
</dbReference>
<dbReference type="GO" id="GO:0000407">
    <property type="term" value="C:phagophore assembly site"/>
    <property type="evidence" value="ECO:0007669"/>
    <property type="project" value="UniProtKB-SubCell"/>
</dbReference>
<dbReference type="GO" id="GO:0000423">
    <property type="term" value="P:mitophagy"/>
    <property type="evidence" value="ECO:0007669"/>
    <property type="project" value="TreeGrafter"/>
</dbReference>
<dbReference type="GO" id="GO:0034727">
    <property type="term" value="P:piecemeal microautophagy of the nucleus"/>
    <property type="evidence" value="ECO:0007669"/>
    <property type="project" value="TreeGrafter"/>
</dbReference>
<dbReference type="GO" id="GO:0034497">
    <property type="term" value="P:protein localization to phagophore assembly site"/>
    <property type="evidence" value="ECO:0007669"/>
    <property type="project" value="TreeGrafter"/>
</dbReference>
<dbReference type="GO" id="GO:0015031">
    <property type="term" value="P:protein transport"/>
    <property type="evidence" value="ECO:0007669"/>
    <property type="project" value="UniProtKB-KW"/>
</dbReference>
<dbReference type="Gene3D" id="6.10.140.1900">
    <property type="match status" value="1"/>
</dbReference>
<dbReference type="Gene3D" id="3.30.900.10">
    <property type="entry name" value="HORMA domain"/>
    <property type="match status" value="1"/>
</dbReference>
<dbReference type="InterPro" id="IPR040182">
    <property type="entry name" value="ATG13"/>
</dbReference>
<dbReference type="InterPro" id="IPR018731">
    <property type="entry name" value="Atg13_N"/>
</dbReference>
<dbReference type="InterPro" id="IPR036570">
    <property type="entry name" value="HORMA_dom_sf"/>
</dbReference>
<dbReference type="PANTHER" id="PTHR13430">
    <property type="match status" value="1"/>
</dbReference>
<dbReference type="PANTHER" id="PTHR13430:SF4">
    <property type="entry name" value="AUTOPHAGY-RELATED PROTEIN 13"/>
    <property type="match status" value="1"/>
</dbReference>
<dbReference type="Pfam" id="PF10033">
    <property type="entry name" value="ATG13"/>
    <property type="match status" value="1"/>
</dbReference>
<comment type="function">
    <text evidence="1">Activates the ATG1 kinase in a nutritional condition dependent manner through the TOR pathway, leading to autophagy. Also involved in cytoplasm to vacuole transport (Cvt) and more specifically in Cvt vesicle formation. Seems to play a role in the switching machinery regulating the conversion between the Cvt pathway and autophagy. Finally, ATG13 is also required for glycogen storage during stationary phase (By similarity).</text>
</comment>
<comment type="subunit">
    <text evidence="1">Interacts with ATG1 to form the ATG1-ATG13 kinase complex.</text>
</comment>
<comment type="subcellular location">
    <subcellularLocation>
        <location evidence="2">Cytoplasm</location>
    </subcellularLocation>
    <subcellularLocation>
        <location evidence="2">Preautophagosomal structure</location>
    </subcellularLocation>
</comment>
<comment type="similarity">
    <text evidence="4">Belongs to the ATG13 family. Fungi subfamily.</text>
</comment>
<keyword id="KW-0072">Autophagy</keyword>
<keyword id="KW-0963">Cytoplasm</keyword>
<keyword id="KW-0653">Protein transport</keyword>
<keyword id="KW-1185">Reference proteome</keyword>
<keyword id="KW-0813">Transport</keyword>
<sequence>MASQDISYQYKSQQEHYPNEKISDSYVQKQNSKLTQVIQQCFSKAVKIIIQSRTVPPAAASPLLNPALHDDSASGNKINRWFNLHIQNSQDLPKDDLKLWKSNHLQSMPPMIIETYLDLRQLTSSQTIVLNDDNGNPWAVAKSGGKKQEVVLERWLIEFDHTDASGSIVDELPLIYKQAIILFRSIYGFARLMPAFKLKKRLLINKSSTKLNKLTIGNKILDGKQPISSKGRIGLSKTIIPRQMLTTDSHMSQKHFQPIQTSLGTLKISIAYRNHCDFCIHDNEEVLSTHFISMDSTPLTESGHGHTKANNTSMSVSPCSSGHPALREGSPTKRGTPPTAIQPFKVGSISNSPPPASHTPNSGYGGSLERRISITSNRSTSNASLFAMLRNPRSSTSSTHTTSNIPIAPSSSSNSTNATNMNNMSYPRSISSSHGSNMQHDDSMFSNPDSTTNTPRFSSSFGSRASRRYSNTSVRQSTPVAASTLTGGSPLSGLYIDDDISEFVRSIDSKADLRFSNSYTAHNSGEPKNNMGSPSGGDALNKFQMMKSHHQQLGDSVNASLILQHNNAVSGSGSGFGVSNSRHSSTSRKSSHSIRSPSPSMSGLYDVVPGSYGRSERRSSSGAGVPGQLSLPSGGGLAAHSPSATEPTSAATITPRETNFNFSNASFLRSASKLSATPVTSTTTAHATIHSVTGMATSPSLYQRTKVGSSIHYENVFEDDDDDEMVMKKPVVTSSGRDEEQLQHKQMKVVSIEKDAGANNFDDDDLLFTMSDMNLTKSS</sequence>